<name>RM01_RECAM</name>
<evidence type="ECO:0000305" key="1"/>
<comment type="subcellular location">
    <subcellularLocation>
        <location>Mitochondrion</location>
    </subcellularLocation>
</comment>
<comment type="similarity">
    <text evidence="1">Belongs to the universal ribosomal protein uL1 family.</text>
</comment>
<protein>
    <recommendedName>
        <fullName evidence="1">Large ribosomal subunit protein uL1m</fullName>
    </recommendedName>
    <alternativeName>
        <fullName>60S ribosomal protein L1, mitochondrial</fullName>
    </alternativeName>
</protein>
<reference key="1">
    <citation type="journal article" date="1997" name="Nature">
        <title>An ancestral mitochondrial DNA resembling a eubacterial genome in miniature.</title>
        <authorList>
            <person name="Lang B.F."/>
            <person name="Burger G."/>
            <person name="O'Kelly C.J."/>
            <person name="Cedergren R."/>
            <person name="Golding G.B."/>
            <person name="Lemieux C."/>
            <person name="Sankoff D."/>
            <person name="Turmel M."/>
            <person name="Gray M.W."/>
        </authorList>
    </citation>
    <scope>NUCLEOTIDE SEQUENCE [GENOMIC DNA]</scope>
    <source>
        <strain>ATCC 50394</strain>
    </source>
</reference>
<gene>
    <name type="primary">RPL1</name>
</gene>
<accession>O21235</accession>
<proteinExistence type="inferred from homology"/>
<feature type="chain" id="PRO_0000125843" description="Large ribosomal subunit protein uL1m">
    <location>
        <begin position="1"/>
        <end position="224"/>
    </location>
</feature>
<dbReference type="EMBL" id="AF007261">
    <property type="protein sequence ID" value="AAD11862.1"/>
    <property type="molecule type" value="Genomic_DNA"/>
</dbReference>
<dbReference type="PIR" id="S78129">
    <property type="entry name" value="S78129"/>
</dbReference>
<dbReference type="RefSeq" id="NP_044747.1">
    <property type="nucleotide sequence ID" value="NC_001823.1"/>
</dbReference>
<dbReference type="SMR" id="O21235"/>
<dbReference type="GeneID" id="801116"/>
<dbReference type="GO" id="GO:0015934">
    <property type="term" value="C:large ribosomal subunit"/>
    <property type="evidence" value="ECO:0007669"/>
    <property type="project" value="InterPro"/>
</dbReference>
<dbReference type="GO" id="GO:0005739">
    <property type="term" value="C:mitochondrion"/>
    <property type="evidence" value="ECO:0007669"/>
    <property type="project" value="UniProtKB-SubCell"/>
</dbReference>
<dbReference type="GO" id="GO:0003723">
    <property type="term" value="F:RNA binding"/>
    <property type="evidence" value="ECO:0007669"/>
    <property type="project" value="InterPro"/>
</dbReference>
<dbReference type="GO" id="GO:0003735">
    <property type="term" value="F:structural constituent of ribosome"/>
    <property type="evidence" value="ECO:0007669"/>
    <property type="project" value="InterPro"/>
</dbReference>
<dbReference type="GO" id="GO:0006412">
    <property type="term" value="P:translation"/>
    <property type="evidence" value="ECO:0007669"/>
    <property type="project" value="InterPro"/>
</dbReference>
<dbReference type="CDD" id="cd00403">
    <property type="entry name" value="Ribosomal_L1"/>
    <property type="match status" value="1"/>
</dbReference>
<dbReference type="Gene3D" id="3.30.190.20">
    <property type="match status" value="1"/>
</dbReference>
<dbReference type="Gene3D" id="3.40.50.790">
    <property type="match status" value="1"/>
</dbReference>
<dbReference type="InterPro" id="IPR002143">
    <property type="entry name" value="Ribosomal_uL1"/>
</dbReference>
<dbReference type="InterPro" id="IPR023674">
    <property type="entry name" value="Ribosomal_uL1-like"/>
</dbReference>
<dbReference type="InterPro" id="IPR028364">
    <property type="entry name" value="Ribosomal_uL1/biogenesis"/>
</dbReference>
<dbReference type="InterPro" id="IPR016095">
    <property type="entry name" value="Ribosomal_uL1_3-a/b-sand"/>
</dbReference>
<dbReference type="InterPro" id="IPR023673">
    <property type="entry name" value="Ribosomal_uL1_CS"/>
</dbReference>
<dbReference type="InterPro" id="IPR005879">
    <property type="entry name" value="Ribosomal_uL1_mit"/>
</dbReference>
<dbReference type="NCBIfam" id="TIGR01170">
    <property type="entry name" value="rplA_mito"/>
    <property type="match status" value="1"/>
</dbReference>
<dbReference type="PANTHER" id="PTHR36427">
    <property type="entry name" value="54S RIBOSOMAL PROTEIN L1, MITOCHONDRIAL"/>
    <property type="match status" value="1"/>
</dbReference>
<dbReference type="PANTHER" id="PTHR36427:SF3">
    <property type="entry name" value="LARGE RIBOSOMAL SUBUNIT PROTEIN UL1M"/>
    <property type="match status" value="1"/>
</dbReference>
<dbReference type="Pfam" id="PF00687">
    <property type="entry name" value="Ribosomal_L1"/>
    <property type="match status" value="1"/>
</dbReference>
<dbReference type="PIRSF" id="PIRSF002155">
    <property type="entry name" value="Ribosomal_L1"/>
    <property type="match status" value="1"/>
</dbReference>
<dbReference type="SUPFAM" id="SSF56808">
    <property type="entry name" value="Ribosomal protein L1"/>
    <property type="match status" value="1"/>
</dbReference>
<dbReference type="PROSITE" id="PS01199">
    <property type="entry name" value="RIBOSOMAL_L1"/>
    <property type="match status" value="1"/>
</dbReference>
<sequence>MSLQEFHNVEDAVKLLKCYNLNDKNLDSKIIVGFVFNKTKSISKKRVKIEQGYLTELGKESFSFPNFFGKSPEIALFTTKKLDNFSTIDYVGSDDLIKKIEDNSIKPNYLIVLKDEVGSLAKYSRVLGPKGLMPTPKQGTVVENNNILLSTIETLKKGSFRIKVNKYNMIQMSVGNLTMNTDQILENIKSLLLYIQNRLPVSYRKTSLKKIYVTMTHGPSFIIN</sequence>
<keyword id="KW-0496">Mitochondrion</keyword>
<keyword id="KW-0687">Ribonucleoprotein</keyword>
<keyword id="KW-0689">Ribosomal protein</keyword>
<geneLocation type="mitochondrion"/>
<organism>
    <name type="scientific">Reclinomonas americana</name>
    <dbReference type="NCBI Taxonomy" id="48483"/>
    <lineage>
        <taxon>Eukaryota</taxon>
        <taxon>Discoba</taxon>
        <taxon>Jakobida</taxon>
        <taxon>Histionina</taxon>
        <taxon>Histionidae</taxon>
        <taxon>Reclinomonas</taxon>
    </lineage>
</organism>